<proteinExistence type="inferred from homology"/>
<protein>
    <recommendedName>
        <fullName evidence="1">Phosphoglucosamine mutase</fullName>
        <ecNumber evidence="1">5.4.2.10</ecNumber>
    </recommendedName>
</protein>
<reference key="1">
    <citation type="submission" date="2006-10" db="EMBL/GenBank/DDBJ databases">
        <authorList>
            <person name="Fleischmann R.D."/>
            <person name="Dodson R.J."/>
            <person name="Haft D.H."/>
            <person name="Merkel J.S."/>
            <person name="Nelson W.C."/>
            <person name="Fraser C.M."/>
        </authorList>
    </citation>
    <scope>NUCLEOTIDE SEQUENCE [LARGE SCALE GENOMIC DNA]</scope>
    <source>
        <strain>ATCC 700084 / mc(2)155</strain>
    </source>
</reference>
<reference key="2">
    <citation type="journal article" date="2007" name="Genome Biol.">
        <title>Interrupted coding sequences in Mycobacterium smegmatis: authentic mutations or sequencing errors?</title>
        <authorList>
            <person name="Deshayes C."/>
            <person name="Perrodou E."/>
            <person name="Gallien S."/>
            <person name="Euphrasie D."/>
            <person name="Schaeffer C."/>
            <person name="Van-Dorsselaer A."/>
            <person name="Poch O."/>
            <person name="Lecompte O."/>
            <person name="Reyrat J.-M."/>
        </authorList>
    </citation>
    <scope>NUCLEOTIDE SEQUENCE [LARGE SCALE GENOMIC DNA]</scope>
    <source>
        <strain>ATCC 700084 / mc(2)155</strain>
    </source>
</reference>
<reference key="3">
    <citation type="journal article" date="2009" name="Genome Res.">
        <title>Ortho-proteogenomics: multiple proteomes investigation through orthology and a new MS-based protocol.</title>
        <authorList>
            <person name="Gallien S."/>
            <person name="Perrodou E."/>
            <person name="Carapito C."/>
            <person name="Deshayes C."/>
            <person name="Reyrat J.-M."/>
            <person name="Van Dorsselaer A."/>
            <person name="Poch O."/>
            <person name="Schaeffer C."/>
            <person name="Lecompte O."/>
        </authorList>
    </citation>
    <scope>NUCLEOTIDE SEQUENCE [LARGE SCALE GENOMIC DNA]</scope>
    <source>
        <strain>ATCC 700084 / mc(2)155</strain>
    </source>
</reference>
<dbReference type="EC" id="5.4.2.10" evidence="1"/>
<dbReference type="EMBL" id="CP000480">
    <property type="protein sequence ID" value="ABK70035.1"/>
    <property type="molecule type" value="Genomic_DNA"/>
</dbReference>
<dbReference type="EMBL" id="CP001663">
    <property type="protein sequence ID" value="AFP37994.1"/>
    <property type="molecule type" value="Genomic_DNA"/>
</dbReference>
<dbReference type="RefSeq" id="WP_003892947.1">
    <property type="nucleotide sequence ID" value="NZ_SIJM01000016.1"/>
</dbReference>
<dbReference type="RefSeq" id="YP_885939.1">
    <property type="nucleotide sequence ID" value="NC_008596.1"/>
</dbReference>
<dbReference type="SMR" id="A0QSQ1"/>
<dbReference type="STRING" id="246196.MSMEG_1559"/>
<dbReference type="PaxDb" id="246196-MSMEI_1521"/>
<dbReference type="GeneID" id="93456399"/>
<dbReference type="KEGG" id="msb:LJ00_07790"/>
<dbReference type="KEGG" id="msg:MSMEI_1521"/>
<dbReference type="KEGG" id="msm:MSMEG_1559"/>
<dbReference type="PATRIC" id="fig|246196.19.peg.1545"/>
<dbReference type="eggNOG" id="COG1109">
    <property type="taxonomic scope" value="Bacteria"/>
</dbReference>
<dbReference type="OrthoDB" id="9803322at2"/>
<dbReference type="Proteomes" id="UP000000757">
    <property type="component" value="Chromosome"/>
</dbReference>
<dbReference type="Proteomes" id="UP000006158">
    <property type="component" value="Chromosome"/>
</dbReference>
<dbReference type="GO" id="GO:0005829">
    <property type="term" value="C:cytosol"/>
    <property type="evidence" value="ECO:0007669"/>
    <property type="project" value="TreeGrafter"/>
</dbReference>
<dbReference type="GO" id="GO:0000287">
    <property type="term" value="F:magnesium ion binding"/>
    <property type="evidence" value="ECO:0007669"/>
    <property type="project" value="UniProtKB-UniRule"/>
</dbReference>
<dbReference type="GO" id="GO:0008966">
    <property type="term" value="F:phosphoglucosamine mutase activity"/>
    <property type="evidence" value="ECO:0007669"/>
    <property type="project" value="UniProtKB-UniRule"/>
</dbReference>
<dbReference type="GO" id="GO:0004615">
    <property type="term" value="F:phosphomannomutase activity"/>
    <property type="evidence" value="ECO:0007669"/>
    <property type="project" value="TreeGrafter"/>
</dbReference>
<dbReference type="GO" id="GO:0005975">
    <property type="term" value="P:carbohydrate metabolic process"/>
    <property type="evidence" value="ECO:0007669"/>
    <property type="project" value="InterPro"/>
</dbReference>
<dbReference type="GO" id="GO:0009252">
    <property type="term" value="P:peptidoglycan biosynthetic process"/>
    <property type="evidence" value="ECO:0007669"/>
    <property type="project" value="TreeGrafter"/>
</dbReference>
<dbReference type="GO" id="GO:0006048">
    <property type="term" value="P:UDP-N-acetylglucosamine biosynthetic process"/>
    <property type="evidence" value="ECO:0007669"/>
    <property type="project" value="TreeGrafter"/>
</dbReference>
<dbReference type="CDD" id="cd05802">
    <property type="entry name" value="GlmM"/>
    <property type="match status" value="1"/>
</dbReference>
<dbReference type="FunFam" id="3.30.310.50:FF:000001">
    <property type="entry name" value="Phosphoglucosamine mutase"/>
    <property type="match status" value="1"/>
</dbReference>
<dbReference type="FunFam" id="3.40.120.10:FF:000001">
    <property type="entry name" value="Phosphoglucosamine mutase"/>
    <property type="match status" value="1"/>
</dbReference>
<dbReference type="FunFam" id="3.40.120.10:FF:000002">
    <property type="entry name" value="Phosphoglucosamine mutase"/>
    <property type="match status" value="1"/>
</dbReference>
<dbReference type="Gene3D" id="3.40.120.10">
    <property type="entry name" value="Alpha-D-Glucose-1,6-Bisphosphate, subunit A, domain 3"/>
    <property type="match status" value="3"/>
</dbReference>
<dbReference type="Gene3D" id="3.30.310.50">
    <property type="entry name" value="Alpha-D-phosphohexomutase, C-terminal domain"/>
    <property type="match status" value="1"/>
</dbReference>
<dbReference type="HAMAP" id="MF_01554_B">
    <property type="entry name" value="GlmM_B"/>
    <property type="match status" value="1"/>
</dbReference>
<dbReference type="InterPro" id="IPR005844">
    <property type="entry name" value="A-D-PHexomutase_a/b/a-I"/>
</dbReference>
<dbReference type="InterPro" id="IPR016055">
    <property type="entry name" value="A-D-PHexomutase_a/b/a-I/II/III"/>
</dbReference>
<dbReference type="InterPro" id="IPR005845">
    <property type="entry name" value="A-D-PHexomutase_a/b/a-II"/>
</dbReference>
<dbReference type="InterPro" id="IPR005846">
    <property type="entry name" value="A-D-PHexomutase_a/b/a-III"/>
</dbReference>
<dbReference type="InterPro" id="IPR005843">
    <property type="entry name" value="A-D-PHexomutase_C"/>
</dbReference>
<dbReference type="InterPro" id="IPR036900">
    <property type="entry name" value="A-D-PHexomutase_C_sf"/>
</dbReference>
<dbReference type="InterPro" id="IPR016066">
    <property type="entry name" value="A-D-PHexomutase_CS"/>
</dbReference>
<dbReference type="InterPro" id="IPR005841">
    <property type="entry name" value="Alpha-D-phosphohexomutase_SF"/>
</dbReference>
<dbReference type="InterPro" id="IPR006352">
    <property type="entry name" value="GlmM_bact"/>
</dbReference>
<dbReference type="InterPro" id="IPR050060">
    <property type="entry name" value="Phosphoglucosamine_mutase"/>
</dbReference>
<dbReference type="NCBIfam" id="TIGR01455">
    <property type="entry name" value="glmM"/>
    <property type="match status" value="1"/>
</dbReference>
<dbReference type="PANTHER" id="PTHR42946:SF1">
    <property type="entry name" value="PHOSPHOGLUCOMUTASE (ALPHA-D-GLUCOSE-1,6-BISPHOSPHATE-DEPENDENT)"/>
    <property type="match status" value="1"/>
</dbReference>
<dbReference type="PANTHER" id="PTHR42946">
    <property type="entry name" value="PHOSPHOHEXOSE MUTASE"/>
    <property type="match status" value="1"/>
</dbReference>
<dbReference type="Pfam" id="PF02878">
    <property type="entry name" value="PGM_PMM_I"/>
    <property type="match status" value="1"/>
</dbReference>
<dbReference type="Pfam" id="PF02879">
    <property type="entry name" value="PGM_PMM_II"/>
    <property type="match status" value="1"/>
</dbReference>
<dbReference type="Pfam" id="PF02880">
    <property type="entry name" value="PGM_PMM_III"/>
    <property type="match status" value="1"/>
</dbReference>
<dbReference type="Pfam" id="PF00408">
    <property type="entry name" value="PGM_PMM_IV"/>
    <property type="match status" value="1"/>
</dbReference>
<dbReference type="PRINTS" id="PR00509">
    <property type="entry name" value="PGMPMM"/>
</dbReference>
<dbReference type="SUPFAM" id="SSF55957">
    <property type="entry name" value="Phosphoglucomutase, C-terminal domain"/>
    <property type="match status" value="1"/>
</dbReference>
<dbReference type="SUPFAM" id="SSF53738">
    <property type="entry name" value="Phosphoglucomutase, first 3 domains"/>
    <property type="match status" value="3"/>
</dbReference>
<dbReference type="PROSITE" id="PS00710">
    <property type="entry name" value="PGM_PMM"/>
    <property type="match status" value="1"/>
</dbReference>
<gene>
    <name evidence="1" type="primary">glmM</name>
    <name type="ordered locus">MSMEG_1559</name>
    <name type="ordered locus">MSMEI_1521</name>
</gene>
<keyword id="KW-0413">Isomerase</keyword>
<keyword id="KW-0460">Magnesium</keyword>
<keyword id="KW-0479">Metal-binding</keyword>
<keyword id="KW-0597">Phosphoprotein</keyword>
<keyword id="KW-1185">Reference proteome</keyword>
<name>GLMM_MYCS2</name>
<organism>
    <name type="scientific">Mycolicibacterium smegmatis (strain ATCC 700084 / mc(2)155)</name>
    <name type="common">Mycobacterium smegmatis</name>
    <dbReference type="NCBI Taxonomy" id="246196"/>
    <lineage>
        <taxon>Bacteria</taxon>
        <taxon>Bacillati</taxon>
        <taxon>Actinomycetota</taxon>
        <taxon>Actinomycetes</taxon>
        <taxon>Mycobacteriales</taxon>
        <taxon>Mycobacteriaceae</taxon>
        <taxon>Mycolicibacterium</taxon>
    </lineage>
</organism>
<comment type="function">
    <text evidence="1">Catalyzes the conversion of glucosamine-6-phosphate to glucosamine-1-phosphate.</text>
</comment>
<comment type="catalytic activity">
    <reaction evidence="1">
        <text>alpha-D-glucosamine 1-phosphate = D-glucosamine 6-phosphate</text>
        <dbReference type="Rhea" id="RHEA:23424"/>
        <dbReference type="ChEBI" id="CHEBI:58516"/>
        <dbReference type="ChEBI" id="CHEBI:58725"/>
        <dbReference type="EC" id="5.4.2.10"/>
    </reaction>
</comment>
<comment type="cofactor">
    <cofactor evidence="1">
        <name>Mg(2+)</name>
        <dbReference type="ChEBI" id="CHEBI:18420"/>
    </cofactor>
    <text evidence="1">Binds 1 Mg(2+) ion per subunit.</text>
</comment>
<comment type="PTM">
    <text evidence="1">Activated by phosphorylation.</text>
</comment>
<comment type="similarity">
    <text evidence="1">Belongs to the phosphohexose mutase family.</text>
</comment>
<evidence type="ECO:0000255" key="1">
    <source>
        <dbReference type="HAMAP-Rule" id="MF_01554"/>
    </source>
</evidence>
<sequence>MARLFGTDGVRGVANRDLTAELALALGSAAARRLSTITTATATDSAERARRVAVVGRDPRASGEMLEAAVIAGLTSEGVDALRVGVLPTPAVAYLTSAYDADFGVMISASHNPMPDNGIKIFGPGGHKLDDATEDRIEELVHAGAVARPTGTGIGRVLDAEDALDRYLRHAGKAVTTRLDGLTVVVDCAHGAAWAAAPRAYRAAGANVIAINAEPTGLNINDNCGSTHMDVVRAAVVEHGADLGLAHDGDADRCLAVDATGHVVDGDAIMVILALAMQEAGELAANTLVATVMSNLGLHLAMRAAGIDVRTTSVGDRYVLEELRSGEFSLGGEQSGHIVMPSFGTTGDGIVTGLRLMSRMAQTGSSLAELADAMHSLPQVLINVAVADKTTVAQAPSVRSAVAAAEAELGDTGRILLRPSGTEQVVRVMVEAADEDTARQVAARVAESVSLQG</sequence>
<feature type="chain" id="PRO_0000301342" description="Phosphoglucosamine mutase">
    <location>
        <begin position="1"/>
        <end position="453"/>
    </location>
</feature>
<feature type="active site" description="Phosphoserine intermediate" evidence="1">
    <location>
        <position position="110"/>
    </location>
</feature>
<feature type="binding site" description="via phosphate group" evidence="1">
    <location>
        <position position="110"/>
    </location>
    <ligand>
        <name>Mg(2+)</name>
        <dbReference type="ChEBI" id="CHEBI:18420"/>
    </ligand>
</feature>
<feature type="binding site" evidence="1">
    <location>
        <position position="248"/>
    </location>
    <ligand>
        <name>Mg(2+)</name>
        <dbReference type="ChEBI" id="CHEBI:18420"/>
    </ligand>
</feature>
<feature type="binding site" evidence="1">
    <location>
        <position position="250"/>
    </location>
    <ligand>
        <name>Mg(2+)</name>
        <dbReference type="ChEBI" id="CHEBI:18420"/>
    </ligand>
</feature>
<feature type="binding site" evidence="1">
    <location>
        <position position="252"/>
    </location>
    <ligand>
        <name>Mg(2+)</name>
        <dbReference type="ChEBI" id="CHEBI:18420"/>
    </ligand>
</feature>
<feature type="modified residue" description="Phosphoserine" evidence="1">
    <location>
        <position position="110"/>
    </location>
</feature>
<accession>A0QSQ1</accession>
<accession>I7G5W8</accession>